<evidence type="ECO:0000255" key="1">
    <source>
        <dbReference type="HAMAP-Rule" id="MF_00081"/>
    </source>
</evidence>
<sequence length="350" mass="39225">MLTQRQKKILQAIVRQYTSTGQPVGSKHLAEKLPFKVSSATVRNEMAVLEDNDLILKEHSSSGRIPSKRGYRYYVDNLLDPQAVTDNDLVVIQNSLGNGFQKIDEIISHSADILSNLTSYTAFTLKPEQESVRLSGFRVVPLGNHKVIAILVTDSGEVENQSFTLPPDIDTDAMQAVIRMINDQLVGLPLSEVVKRLKDDIPLQVLHYMHSPDGFLDIFDNVLSQAARERFFVGGRLNLLDFASTHDPHAIQSLYGLLDKNDNLSNILDSTLTSDNGVNVKIGQEISKNKLLDDYSLITASYNVEQYGRGIIAVLGPTRMPYSRTIGIVNAFRQELAKRLLDFYRHYYDS</sequence>
<feature type="chain" id="PRO_1000057535" description="Heat-inducible transcription repressor HrcA">
    <location>
        <begin position="1"/>
        <end position="350"/>
    </location>
</feature>
<reference key="1">
    <citation type="journal article" date="2011" name="PLoS Genet.">
        <title>The evolution of host specialization in the vertebrate gut symbiont Lactobacillus reuteri.</title>
        <authorList>
            <person name="Frese S.A."/>
            <person name="Benson A.K."/>
            <person name="Tannock G.W."/>
            <person name="Loach D.M."/>
            <person name="Kim J."/>
            <person name="Zhang M."/>
            <person name="Oh P.L."/>
            <person name="Heng N.C."/>
            <person name="Patil P.B."/>
            <person name="Juge N."/>
            <person name="Mackenzie D.A."/>
            <person name="Pearson B.M."/>
            <person name="Lapidus A."/>
            <person name="Dalin E."/>
            <person name="Tice H."/>
            <person name="Goltsman E."/>
            <person name="Land M."/>
            <person name="Hauser L."/>
            <person name="Ivanova N."/>
            <person name="Kyrpides N.C."/>
            <person name="Walter J."/>
        </authorList>
    </citation>
    <scope>NUCLEOTIDE SEQUENCE [LARGE SCALE GENOMIC DNA]</scope>
    <source>
        <strain>DSM 20016</strain>
    </source>
</reference>
<dbReference type="EMBL" id="CP000705">
    <property type="protein sequence ID" value="ABQ82969.1"/>
    <property type="molecule type" value="Genomic_DNA"/>
</dbReference>
<dbReference type="RefSeq" id="WP_003668173.1">
    <property type="nucleotide sequence ID" value="NC_009513.1"/>
</dbReference>
<dbReference type="SMR" id="A5VJE5"/>
<dbReference type="STRING" id="557436.Lreu_0704"/>
<dbReference type="KEGG" id="lre:Lreu_0704"/>
<dbReference type="PATRIC" id="fig|557436.17.peg.551"/>
<dbReference type="eggNOG" id="COG1420">
    <property type="taxonomic scope" value="Bacteria"/>
</dbReference>
<dbReference type="HOGENOM" id="CLU_050019_1_0_9"/>
<dbReference type="Proteomes" id="UP000001991">
    <property type="component" value="Chromosome"/>
</dbReference>
<dbReference type="GO" id="GO:0003677">
    <property type="term" value="F:DNA binding"/>
    <property type="evidence" value="ECO:0007669"/>
    <property type="project" value="InterPro"/>
</dbReference>
<dbReference type="GO" id="GO:0045892">
    <property type="term" value="P:negative regulation of DNA-templated transcription"/>
    <property type="evidence" value="ECO:0007669"/>
    <property type="project" value="UniProtKB-UniRule"/>
</dbReference>
<dbReference type="Gene3D" id="3.30.450.40">
    <property type="match status" value="1"/>
</dbReference>
<dbReference type="Gene3D" id="3.30.390.60">
    <property type="entry name" value="Heat-inducible transcription repressor hrca homolog, domain 3"/>
    <property type="match status" value="1"/>
</dbReference>
<dbReference type="Gene3D" id="1.10.10.10">
    <property type="entry name" value="Winged helix-like DNA-binding domain superfamily/Winged helix DNA-binding domain"/>
    <property type="match status" value="1"/>
</dbReference>
<dbReference type="HAMAP" id="MF_00081">
    <property type="entry name" value="HrcA"/>
    <property type="match status" value="1"/>
</dbReference>
<dbReference type="InterPro" id="IPR029016">
    <property type="entry name" value="GAF-like_dom_sf"/>
</dbReference>
<dbReference type="InterPro" id="IPR002571">
    <property type="entry name" value="HrcA"/>
</dbReference>
<dbReference type="InterPro" id="IPR021153">
    <property type="entry name" value="HrcA_C"/>
</dbReference>
<dbReference type="InterPro" id="IPR036388">
    <property type="entry name" value="WH-like_DNA-bd_sf"/>
</dbReference>
<dbReference type="InterPro" id="IPR036390">
    <property type="entry name" value="WH_DNA-bd_sf"/>
</dbReference>
<dbReference type="InterPro" id="IPR005104">
    <property type="entry name" value="WHTH_HrcA_DNA-bd"/>
</dbReference>
<dbReference type="InterPro" id="IPR023120">
    <property type="entry name" value="WHTH_transcript_rep_HrcA_IDD"/>
</dbReference>
<dbReference type="NCBIfam" id="TIGR00331">
    <property type="entry name" value="hrcA"/>
    <property type="match status" value="1"/>
</dbReference>
<dbReference type="PANTHER" id="PTHR34824">
    <property type="entry name" value="HEAT-INDUCIBLE TRANSCRIPTION REPRESSOR HRCA"/>
    <property type="match status" value="1"/>
</dbReference>
<dbReference type="PANTHER" id="PTHR34824:SF1">
    <property type="entry name" value="HEAT-INDUCIBLE TRANSCRIPTION REPRESSOR HRCA"/>
    <property type="match status" value="1"/>
</dbReference>
<dbReference type="Pfam" id="PF01628">
    <property type="entry name" value="HrcA"/>
    <property type="match status" value="1"/>
</dbReference>
<dbReference type="Pfam" id="PF03444">
    <property type="entry name" value="HrcA_DNA-bdg"/>
    <property type="match status" value="1"/>
</dbReference>
<dbReference type="PIRSF" id="PIRSF005485">
    <property type="entry name" value="HrcA"/>
    <property type="match status" value="1"/>
</dbReference>
<dbReference type="SUPFAM" id="SSF55781">
    <property type="entry name" value="GAF domain-like"/>
    <property type="match status" value="1"/>
</dbReference>
<dbReference type="SUPFAM" id="SSF46785">
    <property type="entry name" value="Winged helix' DNA-binding domain"/>
    <property type="match status" value="1"/>
</dbReference>
<proteinExistence type="inferred from homology"/>
<comment type="function">
    <text evidence="1">Negative regulator of class I heat shock genes (grpE-dnaK-dnaJ and groELS operons). Prevents heat-shock induction of these operons.</text>
</comment>
<comment type="similarity">
    <text evidence="1">Belongs to the HrcA family.</text>
</comment>
<protein>
    <recommendedName>
        <fullName evidence="1">Heat-inducible transcription repressor HrcA</fullName>
    </recommendedName>
</protein>
<organism>
    <name type="scientific">Limosilactobacillus reuteri (strain DSM 20016)</name>
    <name type="common">Lactobacillus reuteri</name>
    <dbReference type="NCBI Taxonomy" id="557436"/>
    <lineage>
        <taxon>Bacteria</taxon>
        <taxon>Bacillati</taxon>
        <taxon>Bacillota</taxon>
        <taxon>Bacilli</taxon>
        <taxon>Lactobacillales</taxon>
        <taxon>Lactobacillaceae</taxon>
        <taxon>Limosilactobacillus</taxon>
    </lineage>
</organism>
<keyword id="KW-1185">Reference proteome</keyword>
<keyword id="KW-0678">Repressor</keyword>
<keyword id="KW-0346">Stress response</keyword>
<keyword id="KW-0804">Transcription</keyword>
<keyword id="KW-0805">Transcription regulation</keyword>
<accession>A5VJE5</accession>
<name>HRCA_LIMRD</name>
<gene>
    <name evidence="1" type="primary">hrcA</name>
    <name type="ordered locus">Lreu_0704</name>
</gene>